<organism>
    <name type="scientific">Saccharolobus islandicus (strain M.16.27)</name>
    <name type="common">Sulfolobus islandicus</name>
    <dbReference type="NCBI Taxonomy" id="427318"/>
    <lineage>
        <taxon>Archaea</taxon>
        <taxon>Thermoproteota</taxon>
        <taxon>Thermoprotei</taxon>
        <taxon>Sulfolobales</taxon>
        <taxon>Sulfolobaceae</taxon>
        <taxon>Saccharolobus</taxon>
    </lineage>
</organism>
<name>PDXS_SACI3</name>
<dbReference type="EC" id="4.3.3.6" evidence="1"/>
<dbReference type="EMBL" id="CP001401">
    <property type="protein sequence ID" value="ACP55553.1"/>
    <property type="molecule type" value="Genomic_DNA"/>
</dbReference>
<dbReference type="RefSeq" id="WP_012711553.1">
    <property type="nucleotide sequence ID" value="NC_012632.1"/>
</dbReference>
<dbReference type="SMR" id="C3N6C8"/>
<dbReference type="GeneID" id="84061870"/>
<dbReference type="KEGG" id="sim:M1627_1675"/>
<dbReference type="HOGENOM" id="CLU_055352_1_0_2"/>
<dbReference type="UniPathway" id="UPA00245"/>
<dbReference type="Proteomes" id="UP000002307">
    <property type="component" value="Chromosome"/>
</dbReference>
<dbReference type="GO" id="GO:0036381">
    <property type="term" value="F:pyridoxal 5'-phosphate synthase (glutamine hydrolysing) activity"/>
    <property type="evidence" value="ECO:0007669"/>
    <property type="project" value="UniProtKB-UniRule"/>
</dbReference>
<dbReference type="GO" id="GO:0006520">
    <property type="term" value="P:amino acid metabolic process"/>
    <property type="evidence" value="ECO:0007669"/>
    <property type="project" value="TreeGrafter"/>
</dbReference>
<dbReference type="GO" id="GO:0042823">
    <property type="term" value="P:pyridoxal phosphate biosynthetic process"/>
    <property type="evidence" value="ECO:0007669"/>
    <property type="project" value="UniProtKB-UniRule"/>
</dbReference>
<dbReference type="GO" id="GO:0008615">
    <property type="term" value="P:pyridoxine biosynthetic process"/>
    <property type="evidence" value="ECO:0007669"/>
    <property type="project" value="TreeGrafter"/>
</dbReference>
<dbReference type="CDD" id="cd04727">
    <property type="entry name" value="pdxS"/>
    <property type="match status" value="1"/>
</dbReference>
<dbReference type="FunFam" id="3.20.20.70:FF:000001">
    <property type="entry name" value="Pyridoxine biosynthesis protein PDX1"/>
    <property type="match status" value="1"/>
</dbReference>
<dbReference type="Gene3D" id="3.20.20.70">
    <property type="entry name" value="Aldolase class I"/>
    <property type="match status" value="1"/>
</dbReference>
<dbReference type="HAMAP" id="MF_01824">
    <property type="entry name" value="PdxS"/>
    <property type="match status" value="1"/>
</dbReference>
<dbReference type="InterPro" id="IPR013785">
    <property type="entry name" value="Aldolase_TIM"/>
</dbReference>
<dbReference type="InterPro" id="IPR001852">
    <property type="entry name" value="PdxS/SNZ"/>
</dbReference>
<dbReference type="InterPro" id="IPR033755">
    <property type="entry name" value="PdxS/SNZ_N"/>
</dbReference>
<dbReference type="InterPro" id="IPR011060">
    <property type="entry name" value="RibuloseP-bd_barrel"/>
</dbReference>
<dbReference type="NCBIfam" id="NF003215">
    <property type="entry name" value="PRK04180.1"/>
    <property type="match status" value="1"/>
</dbReference>
<dbReference type="PANTHER" id="PTHR31829">
    <property type="entry name" value="PYRIDOXAL 5'-PHOSPHATE SYNTHASE SUBUNIT SNZ1-RELATED"/>
    <property type="match status" value="1"/>
</dbReference>
<dbReference type="PANTHER" id="PTHR31829:SF0">
    <property type="entry name" value="PYRIDOXAL 5'-PHOSPHATE SYNTHASE SUBUNIT SNZ1-RELATED"/>
    <property type="match status" value="1"/>
</dbReference>
<dbReference type="Pfam" id="PF01680">
    <property type="entry name" value="SOR_SNZ"/>
    <property type="match status" value="1"/>
</dbReference>
<dbReference type="PIRSF" id="PIRSF029271">
    <property type="entry name" value="Pdx1"/>
    <property type="match status" value="1"/>
</dbReference>
<dbReference type="SUPFAM" id="SSF51366">
    <property type="entry name" value="Ribulose-phoshate binding barrel"/>
    <property type="match status" value="1"/>
</dbReference>
<dbReference type="PROSITE" id="PS01235">
    <property type="entry name" value="PDXS_SNZ_1"/>
    <property type="match status" value="1"/>
</dbReference>
<dbReference type="PROSITE" id="PS51129">
    <property type="entry name" value="PDXS_SNZ_2"/>
    <property type="match status" value="1"/>
</dbReference>
<sequence>MRLYELSFAQIEDFFYKLAEVKDIIKDSGLMEFLPELKKLDSTIQTGTTRVKHAFPIFQKGGVVMDITNVQQAQIAEEAGAVAVMVLDKLPYDVRKSGGVARMADPKIIGEVMNSITIPVMAKVRIGHYYEAKLLEALGVDMIDESEVLTPADEEHHINKWEFSVPFVNGARNLGEALRRTAEGASMIRTKGEAGTGNVSEAVKHMKIINSEIRSLISMSEEDRVKKAREYQVPYQLVELTAKIKRLPIVNFAAGGIATPADAALMMWLGADGLFVGSGIFKSQDPDERAKAVVLAAACWEYPEIVLEAQKMISEQKSMMGIDIKSLKPEELLQVRGL</sequence>
<gene>
    <name evidence="1" type="primary">pdxS</name>
    <name type="ordered locus">M1627_1675</name>
</gene>
<accession>C3N6C8</accession>
<proteinExistence type="inferred from homology"/>
<keyword id="KW-0456">Lyase</keyword>
<keyword id="KW-0663">Pyridoxal phosphate</keyword>
<keyword id="KW-0704">Schiff base</keyword>
<evidence type="ECO:0000255" key="1">
    <source>
        <dbReference type="HAMAP-Rule" id="MF_01824"/>
    </source>
</evidence>
<feature type="chain" id="PRO_1000216061" description="Pyridoxal 5'-phosphate synthase subunit PdxS">
    <location>
        <begin position="1"/>
        <end position="338"/>
    </location>
</feature>
<feature type="active site" description="Schiff-base intermediate with D-ribose 5-phosphate" evidence="1">
    <location>
        <position position="123"/>
    </location>
</feature>
<feature type="binding site" evidence="1">
    <location>
        <position position="66"/>
    </location>
    <ligand>
        <name>D-ribose 5-phosphate</name>
        <dbReference type="ChEBI" id="CHEBI:78346"/>
    </ligand>
</feature>
<feature type="binding site" evidence="1">
    <location>
        <position position="195"/>
    </location>
    <ligand>
        <name>D-ribose 5-phosphate</name>
        <dbReference type="ChEBI" id="CHEBI:78346"/>
    </ligand>
</feature>
<feature type="binding site" evidence="1">
    <location>
        <position position="207"/>
    </location>
    <ligand>
        <name>D-glyceraldehyde 3-phosphate</name>
        <dbReference type="ChEBI" id="CHEBI:59776"/>
    </ligand>
</feature>
<feature type="binding site" evidence="1">
    <location>
        <position position="256"/>
    </location>
    <ligand>
        <name>D-ribose 5-phosphate</name>
        <dbReference type="ChEBI" id="CHEBI:78346"/>
    </ligand>
</feature>
<feature type="binding site" evidence="1">
    <location>
        <begin position="277"/>
        <end position="278"/>
    </location>
    <ligand>
        <name>D-ribose 5-phosphate</name>
        <dbReference type="ChEBI" id="CHEBI:78346"/>
    </ligand>
</feature>
<reference key="1">
    <citation type="journal article" date="2009" name="Proc. Natl. Acad. Sci. U.S.A.">
        <title>Biogeography of the Sulfolobus islandicus pan-genome.</title>
        <authorList>
            <person name="Reno M.L."/>
            <person name="Held N.L."/>
            <person name="Fields C.J."/>
            <person name="Burke P.V."/>
            <person name="Whitaker R.J."/>
        </authorList>
    </citation>
    <scope>NUCLEOTIDE SEQUENCE [LARGE SCALE GENOMIC DNA]</scope>
    <source>
        <strain>M.16.27</strain>
    </source>
</reference>
<comment type="function">
    <text evidence="1">Catalyzes the formation of pyridoxal 5'-phosphate from ribose 5-phosphate (RBP), glyceraldehyde 3-phosphate (G3P) and ammonia. The ammonia is provided by the PdxT subunit. Can also use ribulose 5-phosphate and dihydroxyacetone phosphate as substrates, resulting from enzyme-catalyzed isomerization of RBP and G3P, respectively.</text>
</comment>
<comment type="catalytic activity">
    <reaction evidence="1">
        <text>aldehydo-D-ribose 5-phosphate + D-glyceraldehyde 3-phosphate + L-glutamine = pyridoxal 5'-phosphate + L-glutamate + phosphate + 3 H2O + H(+)</text>
        <dbReference type="Rhea" id="RHEA:31507"/>
        <dbReference type="ChEBI" id="CHEBI:15377"/>
        <dbReference type="ChEBI" id="CHEBI:15378"/>
        <dbReference type="ChEBI" id="CHEBI:29985"/>
        <dbReference type="ChEBI" id="CHEBI:43474"/>
        <dbReference type="ChEBI" id="CHEBI:58273"/>
        <dbReference type="ChEBI" id="CHEBI:58359"/>
        <dbReference type="ChEBI" id="CHEBI:59776"/>
        <dbReference type="ChEBI" id="CHEBI:597326"/>
        <dbReference type="EC" id="4.3.3.6"/>
    </reaction>
</comment>
<comment type="pathway">
    <text evidence="1">Cofactor biosynthesis; pyridoxal 5'-phosphate biosynthesis.</text>
</comment>
<comment type="subunit">
    <text evidence="1">In the presence of PdxT, forms a dodecamer of heterodimers.</text>
</comment>
<comment type="similarity">
    <text evidence="1">Belongs to the PdxS/SNZ family.</text>
</comment>
<protein>
    <recommendedName>
        <fullName evidence="1">Pyridoxal 5'-phosphate synthase subunit PdxS</fullName>
        <shortName evidence="1">PLP synthase subunit PdxS</shortName>
        <ecNumber evidence="1">4.3.3.6</ecNumber>
    </recommendedName>
    <alternativeName>
        <fullName evidence="1">Pdx1</fullName>
    </alternativeName>
</protein>